<comment type="function">
    <text evidence="1">Catalyzes the conversion of dethiobiotin (DTB) to biotin by the insertion of a sulfur atom into dethiobiotin via a radical-based mechanism.</text>
</comment>
<comment type="catalytic activity">
    <reaction evidence="1">
        <text>(4R,5S)-dethiobiotin + (sulfur carrier)-SH + 2 reduced [2Fe-2S]-[ferredoxin] + 2 S-adenosyl-L-methionine = (sulfur carrier)-H + biotin + 2 5'-deoxyadenosine + 2 L-methionine + 2 oxidized [2Fe-2S]-[ferredoxin]</text>
        <dbReference type="Rhea" id="RHEA:22060"/>
        <dbReference type="Rhea" id="RHEA-COMP:10000"/>
        <dbReference type="Rhea" id="RHEA-COMP:10001"/>
        <dbReference type="Rhea" id="RHEA-COMP:14737"/>
        <dbReference type="Rhea" id="RHEA-COMP:14739"/>
        <dbReference type="ChEBI" id="CHEBI:17319"/>
        <dbReference type="ChEBI" id="CHEBI:29917"/>
        <dbReference type="ChEBI" id="CHEBI:33737"/>
        <dbReference type="ChEBI" id="CHEBI:33738"/>
        <dbReference type="ChEBI" id="CHEBI:57586"/>
        <dbReference type="ChEBI" id="CHEBI:57844"/>
        <dbReference type="ChEBI" id="CHEBI:59789"/>
        <dbReference type="ChEBI" id="CHEBI:64428"/>
        <dbReference type="ChEBI" id="CHEBI:149473"/>
        <dbReference type="EC" id="2.8.1.6"/>
    </reaction>
</comment>
<comment type="cofactor">
    <cofactor evidence="1">
        <name>[4Fe-4S] cluster</name>
        <dbReference type="ChEBI" id="CHEBI:49883"/>
    </cofactor>
    <text evidence="1">Binds 1 [4Fe-4S] cluster. The cluster is coordinated with 3 cysteines and an exchangeable S-adenosyl-L-methionine.</text>
</comment>
<comment type="cofactor">
    <cofactor evidence="1">
        <name>[2Fe-2S] cluster</name>
        <dbReference type="ChEBI" id="CHEBI:190135"/>
    </cofactor>
    <text evidence="1">Binds 1 [2Fe-2S] cluster. The cluster is coordinated with 3 cysteines and 1 arginine.</text>
</comment>
<comment type="pathway">
    <text evidence="1">Cofactor biosynthesis; biotin biosynthesis; biotin from 7,8-diaminononanoate: step 2/2.</text>
</comment>
<comment type="subunit">
    <text evidence="1">Homodimer.</text>
</comment>
<comment type="similarity">
    <text evidence="1">Belongs to the radical SAM superfamily. Biotin synthase family.</text>
</comment>
<organism>
    <name type="scientific">Shewanella baltica (strain OS223)</name>
    <dbReference type="NCBI Taxonomy" id="407976"/>
    <lineage>
        <taxon>Bacteria</taxon>
        <taxon>Pseudomonadati</taxon>
        <taxon>Pseudomonadota</taxon>
        <taxon>Gammaproteobacteria</taxon>
        <taxon>Alteromonadales</taxon>
        <taxon>Shewanellaceae</taxon>
        <taxon>Shewanella</taxon>
    </lineage>
</organism>
<reference key="1">
    <citation type="submission" date="2008-12" db="EMBL/GenBank/DDBJ databases">
        <title>Complete sequence of chromosome of Shewanella baltica OS223.</title>
        <authorList>
            <consortium name="US DOE Joint Genome Institute"/>
            <person name="Lucas S."/>
            <person name="Copeland A."/>
            <person name="Lapidus A."/>
            <person name="Glavina del Rio T."/>
            <person name="Dalin E."/>
            <person name="Tice H."/>
            <person name="Bruce D."/>
            <person name="Goodwin L."/>
            <person name="Pitluck S."/>
            <person name="Chertkov O."/>
            <person name="Meincke L."/>
            <person name="Brettin T."/>
            <person name="Detter J.C."/>
            <person name="Han C."/>
            <person name="Kuske C.R."/>
            <person name="Larimer F."/>
            <person name="Land M."/>
            <person name="Hauser L."/>
            <person name="Kyrpides N."/>
            <person name="Ovchinnikova G."/>
            <person name="Brettar I."/>
            <person name="Rodrigues J."/>
            <person name="Konstantinidis K."/>
            <person name="Tiedje J."/>
        </authorList>
    </citation>
    <scope>NUCLEOTIDE SEQUENCE [LARGE SCALE GENOMIC DNA]</scope>
    <source>
        <strain>OS223</strain>
    </source>
</reference>
<gene>
    <name evidence="1" type="primary">bioB</name>
    <name type="ordered locus">Sbal223_2527</name>
</gene>
<feature type="chain" id="PRO_0000381613" description="Biotin synthase">
    <location>
        <begin position="1"/>
        <end position="350"/>
    </location>
</feature>
<feature type="domain" description="Radical SAM core" evidence="2">
    <location>
        <begin position="41"/>
        <end position="268"/>
    </location>
</feature>
<feature type="binding site" evidence="1">
    <location>
        <position position="56"/>
    </location>
    <ligand>
        <name>[4Fe-4S] cluster</name>
        <dbReference type="ChEBI" id="CHEBI:49883"/>
        <note>4Fe-4S-S-AdoMet</note>
    </ligand>
</feature>
<feature type="binding site" evidence="1">
    <location>
        <position position="60"/>
    </location>
    <ligand>
        <name>[4Fe-4S] cluster</name>
        <dbReference type="ChEBI" id="CHEBI:49883"/>
        <note>4Fe-4S-S-AdoMet</note>
    </ligand>
</feature>
<feature type="binding site" evidence="1">
    <location>
        <position position="63"/>
    </location>
    <ligand>
        <name>[4Fe-4S] cluster</name>
        <dbReference type="ChEBI" id="CHEBI:49883"/>
        <note>4Fe-4S-S-AdoMet</note>
    </ligand>
</feature>
<feature type="binding site" evidence="1">
    <location>
        <position position="100"/>
    </location>
    <ligand>
        <name>[2Fe-2S] cluster</name>
        <dbReference type="ChEBI" id="CHEBI:190135"/>
    </ligand>
</feature>
<feature type="binding site" evidence="1">
    <location>
        <position position="131"/>
    </location>
    <ligand>
        <name>[2Fe-2S] cluster</name>
        <dbReference type="ChEBI" id="CHEBI:190135"/>
    </ligand>
</feature>
<feature type="binding site" evidence="1">
    <location>
        <position position="191"/>
    </location>
    <ligand>
        <name>[2Fe-2S] cluster</name>
        <dbReference type="ChEBI" id="CHEBI:190135"/>
    </ligand>
</feature>
<feature type="binding site" evidence="1">
    <location>
        <position position="263"/>
    </location>
    <ligand>
        <name>[2Fe-2S] cluster</name>
        <dbReference type="ChEBI" id="CHEBI:190135"/>
    </ligand>
</feature>
<evidence type="ECO:0000255" key="1">
    <source>
        <dbReference type="HAMAP-Rule" id="MF_01694"/>
    </source>
</evidence>
<evidence type="ECO:0000255" key="2">
    <source>
        <dbReference type="PROSITE-ProRule" id="PRU01266"/>
    </source>
</evidence>
<name>BIOB_SHEB2</name>
<keyword id="KW-0001">2Fe-2S</keyword>
<keyword id="KW-0004">4Fe-4S</keyword>
<keyword id="KW-0093">Biotin biosynthesis</keyword>
<keyword id="KW-0408">Iron</keyword>
<keyword id="KW-0411">Iron-sulfur</keyword>
<keyword id="KW-0479">Metal-binding</keyword>
<keyword id="KW-0949">S-adenosyl-L-methionine</keyword>
<keyword id="KW-0808">Transferase</keyword>
<accession>B8EAJ2</accession>
<protein>
    <recommendedName>
        <fullName evidence="1">Biotin synthase</fullName>
        <ecNumber evidence="1">2.8.1.6</ecNumber>
    </recommendedName>
</protein>
<proteinExistence type="inferred from homology"/>
<dbReference type="EC" id="2.8.1.6" evidence="1"/>
<dbReference type="EMBL" id="CP001252">
    <property type="protein sequence ID" value="ACK47021.1"/>
    <property type="molecule type" value="Genomic_DNA"/>
</dbReference>
<dbReference type="RefSeq" id="WP_006081265.1">
    <property type="nucleotide sequence ID" value="NC_011663.1"/>
</dbReference>
<dbReference type="SMR" id="B8EAJ2"/>
<dbReference type="GeneID" id="11772018"/>
<dbReference type="KEGG" id="sbp:Sbal223_2527"/>
<dbReference type="HOGENOM" id="CLU_033172_1_2_6"/>
<dbReference type="UniPathway" id="UPA00078">
    <property type="reaction ID" value="UER00162"/>
</dbReference>
<dbReference type="Proteomes" id="UP000002507">
    <property type="component" value="Chromosome"/>
</dbReference>
<dbReference type="GO" id="GO:0051537">
    <property type="term" value="F:2 iron, 2 sulfur cluster binding"/>
    <property type="evidence" value="ECO:0007669"/>
    <property type="project" value="UniProtKB-KW"/>
</dbReference>
<dbReference type="GO" id="GO:0051539">
    <property type="term" value="F:4 iron, 4 sulfur cluster binding"/>
    <property type="evidence" value="ECO:0007669"/>
    <property type="project" value="UniProtKB-KW"/>
</dbReference>
<dbReference type="GO" id="GO:0004076">
    <property type="term" value="F:biotin synthase activity"/>
    <property type="evidence" value="ECO:0007669"/>
    <property type="project" value="UniProtKB-UniRule"/>
</dbReference>
<dbReference type="GO" id="GO:0005506">
    <property type="term" value="F:iron ion binding"/>
    <property type="evidence" value="ECO:0007669"/>
    <property type="project" value="UniProtKB-UniRule"/>
</dbReference>
<dbReference type="GO" id="GO:0009102">
    <property type="term" value="P:biotin biosynthetic process"/>
    <property type="evidence" value="ECO:0007669"/>
    <property type="project" value="UniProtKB-UniRule"/>
</dbReference>
<dbReference type="CDD" id="cd01335">
    <property type="entry name" value="Radical_SAM"/>
    <property type="match status" value="1"/>
</dbReference>
<dbReference type="FunFam" id="3.20.20.70:FF:000011">
    <property type="entry name" value="Biotin synthase"/>
    <property type="match status" value="1"/>
</dbReference>
<dbReference type="Gene3D" id="3.20.20.70">
    <property type="entry name" value="Aldolase class I"/>
    <property type="match status" value="1"/>
</dbReference>
<dbReference type="HAMAP" id="MF_01694">
    <property type="entry name" value="BioB"/>
    <property type="match status" value="1"/>
</dbReference>
<dbReference type="InterPro" id="IPR013785">
    <property type="entry name" value="Aldolase_TIM"/>
</dbReference>
<dbReference type="InterPro" id="IPR010722">
    <property type="entry name" value="BATS_dom"/>
</dbReference>
<dbReference type="InterPro" id="IPR002684">
    <property type="entry name" value="Biotin_synth/BioAB"/>
</dbReference>
<dbReference type="InterPro" id="IPR024177">
    <property type="entry name" value="Biotin_synthase"/>
</dbReference>
<dbReference type="InterPro" id="IPR006638">
    <property type="entry name" value="Elp3/MiaA/NifB-like_rSAM"/>
</dbReference>
<dbReference type="InterPro" id="IPR007197">
    <property type="entry name" value="rSAM"/>
</dbReference>
<dbReference type="NCBIfam" id="TIGR00433">
    <property type="entry name" value="bioB"/>
    <property type="match status" value="1"/>
</dbReference>
<dbReference type="PANTHER" id="PTHR22976">
    <property type="entry name" value="BIOTIN SYNTHASE"/>
    <property type="match status" value="1"/>
</dbReference>
<dbReference type="PANTHER" id="PTHR22976:SF2">
    <property type="entry name" value="BIOTIN SYNTHASE, MITOCHONDRIAL"/>
    <property type="match status" value="1"/>
</dbReference>
<dbReference type="Pfam" id="PF06968">
    <property type="entry name" value="BATS"/>
    <property type="match status" value="1"/>
</dbReference>
<dbReference type="Pfam" id="PF04055">
    <property type="entry name" value="Radical_SAM"/>
    <property type="match status" value="1"/>
</dbReference>
<dbReference type="PIRSF" id="PIRSF001619">
    <property type="entry name" value="Biotin_synth"/>
    <property type="match status" value="1"/>
</dbReference>
<dbReference type="SFLD" id="SFLDF00272">
    <property type="entry name" value="biotin_synthase"/>
    <property type="match status" value="1"/>
</dbReference>
<dbReference type="SFLD" id="SFLDS00029">
    <property type="entry name" value="Radical_SAM"/>
    <property type="match status" value="1"/>
</dbReference>
<dbReference type="SMART" id="SM00876">
    <property type="entry name" value="BATS"/>
    <property type="match status" value="1"/>
</dbReference>
<dbReference type="SMART" id="SM00729">
    <property type="entry name" value="Elp3"/>
    <property type="match status" value="1"/>
</dbReference>
<dbReference type="SUPFAM" id="SSF102114">
    <property type="entry name" value="Radical SAM enzymes"/>
    <property type="match status" value="1"/>
</dbReference>
<dbReference type="PROSITE" id="PS51918">
    <property type="entry name" value="RADICAL_SAM"/>
    <property type="match status" value="1"/>
</dbReference>
<sequence length="350" mass="38783">MSQLQVRHDWKREEIEALFALPMNDLLFKAHSIHREVYDPNEVQISRLLSIKTGACPEDCKYCPQSARYDTGLEKERLLAMETVLTEARSAKAAGASRFCMGAAWRNPKEKDMPYLKQMVQEVKALGMETCMTLGMLSEDQANDLASAGLDYYNHNLDTSPEYYGDVITTRTYQNRLDTLTNVRASGMKVCSGGIVGMGEKATDRAGLLQQLANLPQHPDSVPINMLVKVAGTPFEKLDDLDPLEFVRTIAVARILMPLSRVRLSAGRENMSDELQAMCFFAGANSIFYGCKLLTTPNPEESDDMGLFRRLGLRPEQGAAAKLEEESAVLAKAAAYQDKSSAQFYDAGAL</sequence>